<keyword id="KW-0012">Acyltransferase</keyword>
<keyword id="KW-0067">ATP-binding</keyword>
<keyword id="KW-0963">Cytoplasm</keyword>
<keyword id="KW-0547">Nucleotide-binding</keyword>
<keyword id="KW-1185">Reference proteome</keyword>
<keyword id="KW-0694">RNA-binding</keyword>
<keyword id="KW-0808">Transferase</keyword>
<keyword id="KW-0819">tRNA processing</keyword>
<keyword id="KW-0820">tRNA-binding</keyword>
<accession>Q9YBQ6</accession>
<name>TMCA_AERPE</name>
<organism>
    <name type="scientific">Aeropyrum pernix (strain ATCC 700893 / DSM 11879 / JCM 9820 / NBRC 100138 / K1)</name>
    <dbReference type="NCBI Taxonomy" id="272557"/>
    <lineage>
        <taxon>Archaea</taxon>
        <taxon>Thermoproteota</taxon>
        <taxon>Thermoprotei</taxon>
        <taxon>Desulfurococcales</taxon>
        <taxon>Desulfurococcaceae</taxon>
        <taxon>Aeropyrum</taxon>
    </lineage>
</organism>
<proteinExistence type="inferred from homology"/>
<protein>
    <recommendedName>
        <fullName evidence="1">tRNA(Met) cytidine acetyltransferase TmcA</fullName>
        <ecNumber evidence="1">2.3.1.193</ecNumber>
    </recommendedName>
</protein>
<evidence type="ECO:0000255" key="1">
    <source>
        <dbReference type="HAMAP-Rule" id="MF_01886"/>
    </source>
</evidence>
<feature type="chain" id="PRO_0000403129" description="tRNA(Met) cytidine acetyltransferase TmcA">
    <location>
        <begin position="1"/>
        <end position="716"/>
    </location>
</feature>
<feature type="domain" description="N-acetyltransferase" evidence="1">
    <location>
        <begin position="401"/>
        <end position="567"/>
    </location>
</feature>
<feature type="binding site" evidence="1">
    <location>
        <position position="192"/>
    </location>
    <ligand>
        <name>ATP</name>
        <dbReference type="ChEBI" id="CHEBI:30616"/>
    </ligand>
</feature>
<feature type="binding site" evidence="1">
    <location>
        <begin position="217"/>
        <end position="226"/>
    </location>
    <ligand>
        <name>ATP</name>
        <dbReference type="ChEBI" id="CHEBI:30616"/>
    </ligand>
</feature>
<feature type="binding site" evidence="1">
    <location>
        <position position="364"/>
    </location>
    <ligand>
        <name>ATP</name>
        <dbReference type="ChEBI" id="CHEBI:30616"/>
    </ligand>
</feature>
<feature type="binding site" evidence="1">
    <location>
        <begin position="493"/>
        <end position="495"/>
    </location>
    <ligand>
        <name>acetyl-CoA</name>
        <dbReference type="ChEBI" id="CHEBI:57288"/>
    </ligand>
</feature>
<feature type="binding site" evidence="1">
    <location>
        <begin position="500"/>
        <end position="506"/>
    </location>
    <ligand>
        <name>acetyl-CoA</name>
        <dbReference type="ChEBI" id="CHEBI:57288"/>
    </ligand>
</feature>
<sequence>MDVELEVSGFIQRLRHSRLRGLLVVGTGDVKAWAEKLAGYAGGDCALVSPSAGRLPGICRSWAPPGSIERILGGEYAAAIIAVPGLLRPSIIAGAGETVRSGGFLAIVADPPDRWDPGPPRGTGLYREYLFSAIRDNPVHLWIDDESGRIVSESFLEYTGVGAQGWSPGRYKPSPGSGVPRRLVSACRSESQARALESLARFFRGRWRSALVRGDRGRGKSYVIGLALAYAAWRRLIGRAVLVGPTPLSVQSVMAGLLRGLDVLGLKGHRVVRTSGGEVIRVSGPWFRIAYEQPDTAEPSPLVVVDEAAAVGVARVRRLSWRSGKSLVATTIHGYEGSGRAFARLLPNILPKPFIELELREPIRYLPGDPLEEWLYTVFMLRAEPQEPGDPSAARPVEVSREVLARDREVLRSVYGILVQAHYRNTPDDLLAMLESPHHRIYALEADGTPVAVADVVLEGPDVEEEARIALERLLYMAGSPGSGVVSWRVSRIAVHEDLQRRGLGSRLLRHVEAQARESGASLVTTMFSRHDVIPFWLKNGFKPFYVSPRYNRVTGEKNVALAKPLDSAGAEILEKASKTLALKLALAGSSIYRDLAAEKLALLLHHTPATAPPLYLTRIQARHLEGFLKGEVMADQAFDAVYIALLSTLLATRSWNPVEPGLVGAVARVVQGKPYSEVASIIGASTVDEAVGKVEEYIRGILEGARSLWSGRVIP</sequence>
<gene>
    <name evidence="1" type="primary">tmcA</name>
    <name type="ordered locus">APE_1543</name>
</gene>
<dbReference type="EC" id="2.3.1.193" evidence="1"/>
<dbReference type="EMBL" id="BA000002">
    <property type="protein sequence ID" value="BAA80542.1"/>
    <property type="molecule type" value="Genomic_DNA"/>
</dbReference>
<dbReference type="PIR" id="H72635">
    <property type="entry name" value="H72635"/>
</dbReference>
<dbReference type="RefSeq" id="WP_010866435.1">
    <property type="nucleotide sequence ID" value="NC_000854.2"/>
</dbReference>
<dbReference type="SMR" id="Q9YBQ6"/>
<dbReference type="STRING" id="272557.APE_1543"/>
<dbReference type="EnsemblBacteria" id="BAA80542">
    <property type="protein sequence ID" value="BAA80542"/>
    <property type="gene ID" value="APE_1543"/>
</dbReference>
<dbReference type="GeneID" id="1446083"/>
<dbReference type="KEGG" id="ape:APE_1543"/>
<dbReference type="eggNOG" id="arCOG01951">
    <property type="taxonomic scope" value="Archaea"/>
</dbReference>
<dbReference type="Proteomes" id="UP000002518">
    <property type="component" value="Chromosome"/>
</dbReference>
<dbReference type="GO" id="GO:0005737">
    <property type="term" value="C:cytoplasm"/>
    <property type="evidence" value="ECO:0007669"/>
    <property type="project" value="UniProtKB-SubCell"/>
</dbReference>
<dbReference type="GO" id="GO:1990883">
    <property type="term" value="F:18S rRNA cytidine N-acetyltransferase activity"/>
    <property type="evidence" value="ECO:0007669"/>
    <property type="project" value="TreeGrafter"/>
</dbReference>
<dbReference type="GO" id="GO:0005524">
    <property type="term" value="F:ATP binding"/>
    <property type="evidence" value="ECO:0007669"/>
    <property type="project" value="UniProtKB-UniRule"/>
</dbReference>
<dbReference type="GO" id="GO:0000049">
    <property type="term" value="F:tRNA binding"/>
    <property type="evidence" value="ECO:0007669"/>
    <property type="project" value="UniProtKB-UniRule"/>
</dbReference>
<dbReference type="GO" id="GO:0051392">
    <property type="term" value="F:tRNA N4-acetyltransferase activity"/>
    <property type="evidence" value="ECO:0007669"/>
    <property type="project" value="UniProtKB-UniRule"/>
</dbReference>
<dbReference type="GO" id="GO:1904812">
    <property type="term" value="P:rRNA acetylation involved in maturation of SSU-rRNA"/>
    <property type="evidence" value="ECO:0007669"/>
    <property type="project" value="TreeGrafter"/>
</dbReference>
<dbReference type="GO" id="GO:0051391">
    <property type="term" value="P:tRNA acetylation"/>
    <property type="evidence" value="ECO:0007669"/>
    <property type="project" value="UniProtKB-UniRule"/>
</dbReference>
<dbReference type="GO" id="GO:0002101">
    <property type="term" value="P:tRNA wobble cytosine modification"/>
    <property type="evidence" value="ECO:0007669"/>
    <property type="project" value="UniProtKB-UniRule"/>
</dbReference>
<dbReference type="CDD" id="cd04301">
    <property type="entry name" value="NAT_SF"/>
    <property type="match status" value="1"/>
</dbReference>
<dbReference type="Gene3D" id="3.40.50.11040">
    <property type="match status" value="1"/>
</dbReference>
<dbReference type="Gene3D" id="3.40.630.30">
    <property type="match status" value="1"/>
</dbReference>
<dbReference type="Gene3D" id="3.40.50.300">
    <property type="entry name" value="P-loop containing nucleotide triphosphate hydrolases"/>
    <property type="match status" value="1"/>
</dbReference>
<dbReference type="HAMAP" id="MF_01886">
    <property type="entry name" value="tRNA_acetyltr_TmcA"/>
    <property type="match status" value="1"/>
</dbReference>
<dbReference type="InterPro" id="IPR016181">
    <property type="entry name" value="Acyl_CoA_acyltransferase"/>
</dbReference>
<dbReference type="InterPro" id="IPR000182">
    <property type="entry name" value="GNAT_dom"/>
</dbReference>
<dbReference type="InterPro" id="IPR007807">
    <property type="entry name" value="NAT10/TcmA_helicase"/>
</dbReference>
<dbReference type="InterPro" id="IPR027417">
    <property type="entry name" value="P-loop_NTPase"/>
</dbReference>
<dbReference type="InterPro" id="IPR032672">
    <property type="entry name" value="TmcA/NAT10/Kre33"/>
</dbReference>
<dbReference type="InterPro" id="IPR024914">
    <property type="entry name" value="tRNA_acetyltr_TmcA"/>
</dbReference>
<dbReference type="PANTHER" id="PTHR10925">
    <property type="entry name" value="N-ACETYLTRANSFERASE 10"/>
    <property type="match status" value="1"/>
</dbReference>
<dbReference type="PANTHER" id="PTHR10925:SF5">
    <property type="entry name" value="RNA CYTIDINE ACETYLTRANSFERASE"/>
    <property type="match status" value="1"/>
</dbReference>
<dbReference type="Pfam" id="PF00583">
    <property type="entry name" value="Acetyltransf_1"/>
    <property type="match status" value="1"/>
</dbReference>
<dbReference type="Pfam" id="PF05127">
    <property type="entry name" value="NAT10_TcmA_helicase"/>
    <property type="match status" value="1"/>
</dbReference>
<dbReference type="SUPFAM" id="SSF55729">
    <property type="entry name" value="Acyl-CoA N-acyltransferases (Nat)"/>
    <property type="match status" value="1"/>
</dbReference>
<dbReference type="SUPFAM" id="SSF52540">
    <property type="entry name" value="P-loop containing nucleoside triphosphate hydrolases"/>
    <property type="match status" value="1"/>
</dbReference>
<dbReference type="PROSITE" id="PS51186">
    <property type="entry name" value="GNAT"/>
    <property type="match status" value="1"/>
</dbReference>
<comment type="function">
    <text evidence="1">Catalyzes the formation of N(4)-acetylcytidine (ac(4)C) at the wobble position of tRNA(Met), by using acetyl-CoA as an acetyl donor and ATP (or GTP).</text>
</comment>
<comment type="catalytic activity">
    <reaction evidence="1">
        <text>cytidine(34) in elongator tRNA(Met) + acetyl-CoA + ATP + H2O = N(4)-acetylcytidine(34) in elongator tRNA(Met) + ADP + phosphate + CoA + H(+)</text>
        <dbReference type="Rhea" id="RHEA:43788"/>
        <dbReference type="Rhea" id="RHEA-COMP:10693"/>
        <dbReference type="Rhea" id="RHEA-COMP:10694"/>
        <dbReference type="ChEBI" id="CHEBI:15377"/>
        <dbReference type="ChEBI" id="CHEBI:15378"/>
        <dbReference type="ChEBI" id="CHEBI:30616"/>
        <dbReference type="ChEBI" id="CHEBI:43474"/>
        <dbReference type="ChEBI" id="CHEBI:57287"/>
        <dbReference type="ChEBI" id="CHEBI:57288"/>
        <dbReference type="ChEBI" id="CHEBI:74900"/>
        <dbReference type="ChEBI" id="CHEBI:82748"/>
        <dbReference type="ChEBI" id="CHEBI:456216"/>
        <dbReference type="EC" id="2.3.1.193"/>
    </reaction>
</comment>
<comment type="subcellular location">
    <subcellularLocation>
        <location evidence="1">Cytoplasm</location>
    </subcellularLocation>
</comment>
<comment type="similarity">
    <text evidence="1">Belongs to the RNA cytidine acetyltransferase family. TmcA subfamily.</text>
</comment>
<reference key="1">
    <citation type="journal article" date="1999" name="DNA Res.">
        <title>Complete genome sequence of an aerobic hyper-thermophilic crenarchaeon, Aeropyrum pernix K1.</title>
        <authorList>
            <person name="Kawarabayasi Y."/>
            <person name="Hino Y."/>
            <person name="Horikawa H."/>
            <person name="Yamazaki S."/>
            <person name="Haikawa Y."/>
            <person name="Jin-no K."/>
            <person name="Takahashi M."/>
            <person name="Sekine M."/>
            <person name="Baba S."/>
            <person name="Ankai A."/>
            <person name="Kosugi H."/>
            <person name="Hosoyama A."/>
            <person name="Fukui S."/>
            <person name="Nagai Y."/>
            <person name="Nishijima K."/>
            <person name="Nakazawa H."/>
            <person name="Takamiya M."/>
            <person name="Masuda S."/>
            <person name="Funahashi T."/>
            <person name="Tanaka T."/>
            <person name="Kudoh Y."/>
            <person name="Yamazaki J."/>
            <person name="Kushida N."/>
            <person name="Oguchi A."/>
            <person name="Aoki K."/>
            <person name="Kubota K."/>
            <person name="Nakamura Y."/>
            <person name="Nomura N."/>
            <person name="Sako Y."/>
            <person name="Kikuchi H."/>
        </authorList>
    </citation>
    <scope>NUCLEOTIDE SEQUENCE [LARGE SCALE GENOMIC DNA]</scope>
    <source>
        <strain>ATCC 700893 / DSM 11879 / JCM 9820 / NBRC 100138 / K1</strain>
    </source>
</reference>